<comment type="function">
    <text evidence="1">Digests double-stranded RNA. Involved in the processing of primary rRNA transcript to yield the immediate precursors to the large and small rRNAs (23S and 16S). Processes some mRNAs, and tRNAs when they are encoded in the rRNA operon. Processes pre-crRNA and tracrRNA of type II CRISPR loci if present in the organism.</text>
</comment>
<comment type="catalytic activity">
    <reaction evidence="1">
        <text>Endonucleolytic cleavage to 5'-phosphomonoester.</text>
        <dbReference type="EC" id="3.1.26.3"/>
    </reaction>
</comment>
<comment type="cofactor">
    <cofactor evidence="1">
        <name>Mg(2+)</name>
        <dbReference type="ChEBI" id="CHEBI:18420"/>
    </cofactor>
</comment>
<comment type="subunit">
    <text evidence="1">Homodimer.</text>
</comment>
<comment type="subcellular location">
    <subcellularLocation>
        <location evidence="1">Cytoplasm</location>
    </subcellularLocation>
</comment>
<comment type="similarity">
    <text evidence="1">Belongs to the ribonuclease III family.</text>
</comment>
<protein>
    <recommendedName>
        <fullName evidence="1">Ribonuclease 3</fullName>
        <ecNumber evidence="1">3.1.26.3</ecNumber>
    </recommendedName>
    <alternativeName>
        <fullName evidence="1">Ribonuclease III</fullName>
        <shortName evidence="1">RNase III</shortName>
    </alternativeName>
</protein>
<dbReference type="EC" id="3.1.26.3" evidence="1"/>
<dbReference type="EMBL" id="BX842651">
    <property type="protein sequence ID" value="CAE79792.1"/>
    <property type="molecule type" value="Genomic_DNA"/>
</dbReference>
<dbReference type="RefSeq" id="WP_011164394.1">
    <property type="nucleotide sequence ID" value="NC_005363.1"/>
</dbReference>
<dbReference type="SMR" id="Q6MLR5"/>
<dbReference type="STRING" id="264462.Bd1941"/>
<dbReference type="GeneID" id="93012896"/>
<dbReference type="KEGG" id="bba:Bd1941"/>
<dbReference type="eggNOG" id="COG0571">
    <property type="taxonomic scope" value="Bacteria"/>
</dbReference>
<dbReference type="HOGENOM" id="CLU_000907_1_3_7"/>
<dbReference type="Proteomes" id="UP000008080">
    <property type="component" value="Chromosome"/>
</dbReference>
<dbReference type="GO" id="GO:0005737">
    <property type="term" value="C:cytoplasm"/>
    <property type="evidence" value="ECO:0007669"/>
    <property type="project" value="UniProtKB-SubCell"/>
</dbReference>
<dbReference type="GO" id="GO:0003725">
    <property type="term" value="F:double-stranded RNA binding"/>
    <property type="evidence" value="ECO:0007669"/>
    <property type="project" value="TreeGrafter"/>
</dbReference>
<dbReference type="GO" id="GO:0046872">
    <property type="term" value="F:metal ion binding"/>
    <property type="evidence" value="ECO:0007669"/>
    <property type="project" value="UniProtKB-KW"/>
</dbReference>
<dbReference type="GO" id="GO:0004525">
    <property type="term" value="F:ribonuclease III activity"/>
    <property type="evidence" value="ECO:0007669"/>
    <property type="project" value="UniProtKB-UniRule"/>
</dbReference>
<dbReference type="GO" id="GO:0019843">
    <property type="term" value="F:rRNA binding"/>
    <property type="evidence" value="ECO:0007669"/>
    <property type="project" value="UniProtKB-KW"/>
</dbReference>
<dbReference type="GO" id="GO:0006397">
    <property type="term" value="P:mRNA processing"/>
    <property type="evidence" value="ECO:0007669"/>
    <property type="project" value="UniProtKB-UniRule"/>
</dbReference>
<dbReference type="GO" id="GO:0010468">
    <property type="term" value="P:regulation of gene expression"/>
    <property type="evidence" value="ECO:0007669"/>
    <property type="project" value="TreeGrafter"/>
</dbReference>
<dbReference type="GO" id="GO:0006364">
    <property type="term" value="P:rRNA processing"/>
    <property type="evidence" value="ECO:0007669"/>
    <property type="project" value="UniProtKB-UniRule"/>
</dbReference>
<dbReference type="GO" id="GO:0008033">
    <property type="term" value="P:tRNA processing"/>
    <property type="evidence" value="ECO:0007669"/>
    <property type="project" value="UniProtKB-KW"/>
</dbReference>
<dbReference type="CDD" id="cd10845">
    <property type="entry name" value="DSRM_RNAse_III_family"/>
    <property type="match status" value="1"/>
</dbReference>
<dbReference type="CDD" id="cd00593">
    <property type="entry name" value="RIBOc"/>
    <property type="match status" value="1"/>
</dbReference>
<dbReference type="FunFam" id="1.10.1520.10:FF:000001">
    <property type="entry name" value="Ribonuclease 3"/>
    <property type="match status" value="1"/>
</dbReference>
<dbReference type="FunFam" id="3.30.160.20:FF:000003">
    <property type="entry name" value="Ribonuclease 3"/>
    <property type="match status" value="1"/>
</dbReference>
<dbReference type="Gene3D" id="3.30.160.20">
    <property type="match status" value="1"/>
</dbReference>
<dbReference type="Gene3D" id="1.10.1520.10">
    <property type="entry name" value="Ribonuclease III domain"/>
    <property type="match status" value="1"/>
</dbReference>
<dbReference type="HAMAP" id="MF_00104">
    <property type="entry name" value="RNase_III"/>
    <property type="match status" value="1"/>
</dbReference>
<dbReference type="InterPro" id="IPR014720">
    <property type="entry name" value="dsRBD_dom"/>
</dbReference>
<dbReference type="InterPro" id="IPR011907">
    <property type="entry name" value="RNase_III"/>
</dbReference>
<dbReference type="InterPro" id="IPR000999">
    <property type="entry name" value="RNase_III_dom"/>
</dbReference>
<dbReference type="InterPro" id="IPR036389">
    <property type="entry name" value="RNase_III_sf"/>
</dbReference>
<dbReference type="NCBIfam" id="TIGR02191">
    <property type="entry name" value="RNaseIII"/>
    <property type="match status" value="1"/>
</dbReference>
<dbReference type="PANTHER" id="PTHR11207:SF0">
    <property type="entry name" value="RIBONUCLEASE 3"/>
    <property type="match status" value="1"/>
</dbReference>
<dbReference type="PANTHER" id="PTHR11207">
    <property type="entry name" value="RIBONUCLEASE III"/>
    <property type="match status" value="1"/>
</dbReference>
<dbReference type="Pfam" id="PF00035">
    <property type="entry name" value="dsrm"/>
    <property type="match status" value="1"/>
</dbReference>
<dbReference type="Pfam" id="PF14622">
    <property type="entry name" value="Ribonucleas_3_3"/>
    <property type="match status" value="1"/>
</dbReference>
<dbReference type="SMART" id="SM00358">
    <property type="entry name" value="DSRM"/>
    <property type="match status" value="1"/>
</dbReference>
<dbReference type="SMART" id="SM00535">
    <property type="entry name" value="RIBOc"/>
    <property type="match status" value="1"/>
</dbReference>
<dbReference type="SUPFAM" id="SSF54768">
    <property type="entry name" value="dsRNA-binding domain-like"/>
    <property type="match status" value="1"/>
</dbReference>
<dbReference type="SUPFAM" id="SSF69065">
    <property type="entry name" value="RNase III domain-like"/>
    <property type="match status" value="1"/>
</dbReference>
<dbReference type="PROSITE" id="PS50137">
    <property type="entry name" value="DS_RBD"/>
    <property type="match status" value="1"/>
</dbReference>
<dbReference type="PROSITE" id="PS00517">
    <property type="entry name" value="RNASE_3_1"/>
    <property type="match status" value="1"/>
</dbReference>
<dbReference type="PROSITE" id="PS50142">
    <property type="entry name" value="RNASE_3_2"/>
    <property type="match status" value="1"/>
</dbReference>
<proteinExistence type="inferred from homology"/>
<gene>
    <name evidence="1" type="primary">rnc</name>
    <name type="ordered locus">Bd1941</name>
</gene>
<name>RNC_BDEBA</name>
<keyword id="KW-0963">Cytoplasm</keyword>
<keyword id="KW-0255">Endonuclease</keyword>
<keyword id="KW-0378">Hydrolase</keyword>
<keyword id="KW-0460">Magnesium</keyword>
<keyword id="KW-0479">Metal-binding</keyword>
<keyword id="KW-0507">mRNA processing</keyword>
<keyword id="KW-0540">Nuclease</keyword>
<keyword id="KW-1185">Reference proteome</keyword>
<keyword id="KW-0694">RNA-binding</keyword>
<keyword id="KW-0698">rRNA processing</keyword>
<keyword id="KW-0699">rRNA-binding</keyword>
<keyword id="KW-0819">tRNA processing</keyword>
<organism>
    <name type="scientific">Bdellovibrio bacteriovorus (strain ATCC 15356 / DSM 50701 / NCIMB 9529 / HD100)</name>
    <dbReference type="NCBI Taxonomy" id="264462"/>
    <lineage>
        <taxon>Bacteria</taxon>
        <taxon>Pseudomonadati</taxon>
        <taxon>Bdellovibrionota</taxon>
        <taxon>Bdellovibrionia</taxon>
        <taxon>Bdellovibrionales</taxon>
        <taxon>Pseudobdellovibrionaceae</taxon>
        <taxon>Bdellovibrio</taxon>
    </lineage>
</organism>
<accession>Q6MLR5</accession>
<evidence type="ECO:0000255" key="1">
    <source>
        <dbReference type="HAMAP-Rule" id="MF_00104"/>
    </source>
</evidence>
<sequence>MIDQGRKSLEERVGHQFKNPALLERALTHKSFANELRNTVEHNEKLEFLGDAVLDLVVGEFLYEKFPTDTEGGLSKKRASIVNEEVLSELALEMGLNKLMQLGKGEALTGGAQKPRLIASSFEAIVGALYLDGGFEVARSFIRQEFVPLADRVCGHEDFERDYKTRLQELVQKSSKETPRYEVLAEEGPPHDREFLVCVKVKEDVWAQGRGRSKKNAEQMAAKNALEMKYKETN</sequence>
<reference key="1">
    <citation type="journal article" date="2004" name="Science">
        <title>A predator unmasked: life cycle of Bdellovibrio bacteriovorus from a genomic perspective.</title>
        <authorList>
            <person name="Rendulic S."/>
            <person name="Jagtap P."/>
            <person name="Rosinus A."/>
            <person name="Eppinger M."/>
            <person name="Baar C."/>
            <person name="Lanz C."/>
            <person name="Keller H."/>
            <person name="Lambert C."/>
            <person name="Evans K.J."/>
            <person name="Goesmann A."/>
            <person name="Meyer F."/>
            <person name="Sockett R.E."/>
            <person name="Schuster S.C."/>
        </authorList>
    </citation>
    <scope>NUCLEOTIDE SEQUENCE [LARGE SCALE GENOMIC DNA]</scope>
    <source>
        <strain>ATCC 15356 / DSM 50701 / NCIMB 9529 / HD100</strain>
    </source>
</reference>
<feature type="chain" id="PRO_0000228501" description="Ribonuclease 3">
    <location>
        <begin position="1"/>
        <end position="234"/>
    </location>
</feature>
<feature type="domain" description="RNase III" evidence="1">
    <location>
        <begin position="6"/>
        <end position="134"/>
    </location>
</feature>
<feature type="domain" description="DRBM" evidence="1">
    <location>
        <begin position="162"/>
        <end position="231"/>
    </location>
</feature>
<feature type="active site" evidence="1">
    <location>
        <position position="51"/>
    </location>
</feature>
<feature type="active site" evidence="1">
    <location>
        <position position="123"/>
    </location>
</feature>
<feature type="binding site" evidence="1">
    <location>
        <position position="47"/>
    </location>
    <ligand>
        <name>Mg(2+)</name>
        <dbReference type="ChEBI" id="CHEBI:18420"/>
    </ligand>
</feature>
<feature type="binding site" evidence="1">
    <location>
        <position position="120"/>
    </location>
    <ligand>
        <name>Mg(2+)</name>
        <dbReference type="ChEBI" id="CHEBI:18420"/>
    </ligand>
</feature>
<feature type="binding site" evidence="1">
    <location>
        <position position="123"/>
    </location>
    <ligand>
        <name>Mg(2+)</name>
        <dbReference type="ChEBI" id="CHEBI:18420"/>
    </ligand>
</feature>